<proteinExistence type="evidence at transcript level"/>
<comment type="function">
    <text evidence="1">Thyroid hormone-binding protein. Probably transports thyroxine from the bloodstream to the brain (By similarity).</text>
</comment>
<comment type="subunit">
    <text evidence="1">Homotetramer. Dimer of dimers. In the homotetramer, subunits assemble around a central channel that can accommodate two ligand molecules. Interacts with RBP4 (By similarity).</text>
</comment>
<comment type="subcellular location">
    <subcellularLocation>
        <location evidence="1">Secreted</location>
    </subcellularLocation>
</comment>
<comment type="tissue specificity">
    <text>Highly expressed in the choroid plexus.</text>
</comment>
<comment type="PTM">
    <text evidence="2">Sulfonation of the reactive cysteine Cys-30 enhances the stability of the native conformation of TTR, avoiding misassembly of the protein leading to amyloid formation.</text>
</comment>
<comment type="similarity">
    <text evidence="5">Belongs to the transthyretin family.</text>
</comment>
<sequence length="147" mass="15771">MASFRLLLLCLAGLVFVSEASPAGAGESKCPLMVKVLDAVRGSPAANVGVKVFKKAADETWEPFASGKTSDSGELHGLTTEDKFVEGLYKVELDTKSYWKSLGISPFHEYAEVVFTANDSGLRHYTIAALLSPYSYSTTALVSSPKE</sequence>
<keyword id="KW-0301">Gamma-carboxyglutamic acid</keyword>
<keyword id="KW-0325">Glycoprotein</keyword>
<keyword id="KW-0372">Hormone</keyword>
<keyword id="KW-0597">Phosphoprotein</keyword>
<keyword id="KW-1185">Reference proteome</keyword>
<keyword id="KW-0964">Secreted</keyword>
<keyword id="KW-0732">Signal</keyword>
<keyword id="KW-0765">Sulfation</keyword>
<keyword id="KW-0795">Thyroid hormone</keyword>
<keyword id="KW-0813">Transport</keyword>
<gene>
    <name type="primary">TTR</name>
</gene>
<organism>
    <name type="scientific">Ovis aries</name>
    <name type="common">Sheep</name>
    <dbReference type="NCBI Taxonomy" id="9940"/>
    <lineage>
        <taxon>Eukaryota</taxon>
        <taxon>Metazoa</taxon>
        <taxon>Chordata</taxon>
        <taxon>Craniata</taxon>
        <taxon>Vertebrata</taxon>
        <taxon>Euteleostomi</taxon>
        <taxon>Mammalia</taxon>
        <taxon>Eutheria</taxon>
        <taxon>Laurasiatheria</taxon>
        <taxon>Artiodactyla</taxon>
        <taxon>Ruminantia</taxon>
        <taxon>Pecora</taxon>
        <taxon>Bovidae</taxon>
        <taxon>Caprinae</taxon>
        <taxon>Ovis</taxon>
    </lineage>
</organism>
<name>TTHY_SHEEP</name>
<reference key="1">
    <citation type="journal article" date="1989" name="Nucleic Acids Res.">
        <title>The nucleotide sequence of transthyretin cDNA isolated from a sheep choroid plexus cDNA library.</title>
        <authorList>
            <person name="Tu G."/>
            <person name="Cole T."/>
            <person name="Duan W."/>
            <person name="Schreiber G."/>
        </authorList>
    </citation>
    <scope>NUCLEOTIDE SEQUENCE [MRNA]</scope>
    <source>
        <tissue>Choroid plexus</tissue>
    </source>
</reference>
<protein>
    <recommendedName>
        <fullName>Transthyretin</fullName>
    </recommendedName>
    <alternativeName>
        <fullName>Prealbumin</fullName>
    </alternativeName>
</protein>
<accession>P12303</accession>
<evidence type="ECO:0000250" key="1"/>
<evidence type="ECO:0000250" key="2">
    <source>
        <dbReference type="UniProtKB" id="P02766"/>
    </source>
</evidence>
<evidence type="ECO:0000250" key="3">
    <source>
        <dbReference type="UniProtKB" id="P02767"/>
    </source>
</evidence>
<evidence type="ECO:0000255" key="4"/>
<evidence type="ECO:0000305" key="5"/>
<feature type="signal peptide">
    <location>
        <begin position="1"/>
        <end position="20"/>
    </location>
</feature>
<feature type="chain" id="PRO_0000035765" description="Transthyretin">
    <location>
        <begin position="21"/>
        <end position="147"/>
    </location>
</feature>
<feature type="binding site" evidence="2">
    <location>
        <position position="35"/>
    </location>
    <ligand>
        <name>L-thyroxine</name>
        <dbReference type="ChEBI" id="CHEBI:58448"/>
    </ligand>
</feature>
<feature type="binding site" evidence="2">
    <location>
        <position position="74"/>
    </location>
    <ligand>
        <name>L-thyroxine</name>
        <dbReference type="ChEBI" id="CHEBI:58448"/>
    </ligand>
</feature>
<feature type="binding site" evidence="2">
    <location>
        <position position="137"/>
    </location>
    <ligand>
        <name>L-thyroxine</name>
        <dbReference type="ChEBI" id="CHEBI:58448"/>
    </ligand>
</feature>
<feature type="modified residue" description="Sulfocysteine" evidence="2">
    <location>
        <position position="30"/>
    </location>
</feature>
<feature type="modified residue" description="4-carboxyglutamate" evidence="2">
    <location>
        <position position="62"/>
    </location>
</feature>
<feature type="modified residue" description="Phosphoserine" evidence="3">
    <location>
        <position position="72"/>
    </location>
</feature>
<feature type="glycosylation site" description="N-linked (GlcNAc...) asparagine" evidence="4">
    <location>
        <position position="118"/>
    </location>
</feature>
<dbReference type="EMBL" id="X15576">
    <property type="protein sequence ID" value="CAA33600.1"/>
    <property type="molecule type" value="mRNA"/>
</dbReference>
<dbReference type="PIR" id="S05320">
    <property type="entry name" value="S05320"/>
</dbReference>
<dbReference type="RefSeq" id="NP_001009800.1">
    <property type="nucleotide sequence ID" value="NM_001009800.1"/>
</dbReference>
<dbReference type="SMR" id="P12303"/>
<dbReference type="STRING" id="9940.ENSOARP00000006793"/>
<dbReference type="GlyCosmos" id="P12303">
    <property type="glycosylation" value="1 site, No reported glycans"/>
</dbReference>
<dbReference type="PaxDb" id="9940-ENSOARP00000006793"/>
<dbReference type="Ensembl" id="ENSOART00040031013">
    <property type="protein sequence ID" value="ENSOARP00040015874"/>
    <property type="gene ID" value="ENSOARG00040018710"/>
</dbReference>
<dbReference type="Ensembl" id="ENSOART00180048971">
    <property type="protein sequence ID" value="ENSOARP00180024988"/>
    <property type="gene ID" value="ENSOARG00180029609"/>
</dbReference>
<dbReference type="Ensembl" id="ENSOART00185053625">
    <property type="protein sequence ID" value="ENSOARP00185027373"/>
    <property type="gene ID" value="ENSOARG00185032172"/>
</dbReference>
<dbReference type="Ensembl" id="ENSOART00215046615">
    <property type="protein sequence ID" value="ENSOARP00215024181"/>
    <property type="gene ID" value="ENSOARG00215027921"/>
</dbReference>
<dbReference type="Ensembl" id="ENSOART00220058159">
    <property type="protein sequence ID" value="ENSOARP00220031175"/>
    <property type="gene ID" value="ENSOARG00220035044"/>
</dbReference>
<dbReference type="Ensembl" id="ENSOART00225007946">
    <property type="protein sequence ID" value="ENSOARP00225003746"/>
    <property type="gene ID" value="ENSOARG00225004852"/>
</dbReference>
<dbReference type="Ensembl" id="ENSOART00260017870">
    <property type="protein sequence ID" value="ENSOARP00260009018"/>
    <property type="gene ID" value="ENSOARG00260010980"/>
</dbReference>
<dbReference type="GeneID" id="443389"/>
<dbReference type="KEGG" id="oas:443389"/>
<dbReference type="CTD" id="7276"/>
<dbReference type="eggNOG" id="KOG3006">
    <property type="taxonomic scope" value="Eukaryota"/>
</dbReference>
<dbReference type="HOGENOM" id="CLU_115536_2_0_1"/>
<dbReference type="OMA" id="AMYKVEL"/>
<dbReference type="OrthoDB" id="10265230at2759"/>
<dbReference type="Proteomes" id="UP000002356">
    <property type="component" value="Chromosome 23"/>
</dbReference>
<dbReference type="Bgee" id="ENSOARG00000006342">
    <property type="expression patterns" value="Expressed in embryo and 30 other cell types or tissues"/>
</dbReference>
<dbReference type="GO" id="GO:0005615">
    <property type="term" value="C:extracellular space"/>
    <property type="evidence" value="ECO:0007669"/>
    <property type="project" value="TreeGrafter"/>
</dbReference>
<dbReference type="GO" id="GO:0005179">
    <property type="term" value="F:hormone activity"/>
    <property type="evidence" value="ECO:0007669"/>
    <property type="project" value="UniProtKB-KW"/>
</dbReference>
<dbReference type="GO" id="GO:0042802">
    <property type="term" value="F:identical protein binding"/>
    <property type="evidence" value="ECO:0007669"/>
    <property type="project" value="Ensembl"/>
</dbReference>
<dbReference type="GO" id="GO:0140313">
    <property type="term" value="F:molecular sequestering activity"/>
    <property type="evidence" value="ECO:0007669"/>
    <property type="project" value="Ensembl"/>
</dbReference>
<dbReference type="GO" id="GO:0070324">
    <property type="term" value="F:thyroid hormone binding"/>
    <property type="evidence" value="ECO:0007669"/>
    <property type="project" value="TreeGrafter"/>
</dbReference>
<dbReference type="GO" id="GO:0003105">
    <property type="term" value="P:negative regulation of glomerular filtration"/>
    <property type="evidence" value="ECO:0007669"/>
    <property type="project" value="Ensembl"/>
</dbReference>
<dbReference type="GO" id="GO:0007603">
    <property type="term" value="P:phototransduction, visible light"/>
    <property type="evidence" value="ECO:0007669"/>
    <property type="project" value="Ensembl"/>
</dbReference>
<dbReference type="GO" id="GO:0006144">
    <property type="term" value="P:purine nucleobase metabolic process"/>
    <property type="evidence" value="ECO:0007669"/>
    <property type="project" value="TreeGrafter"/>
</dbReference>
<dbReference type="GO" id="GO:0001523">
    <property type="term" value="P:retinoid metabolic process"/>
    <property type="evidence" value="ECO:0007669"/>
    <property type="project" value="Ensembl"/>
</dbReference>
<dbReference type="CDD" id="cd05821">
    <property type="entry name" value="TLP_Transthyretin"/>
    <property type="match status" value="1"/>
</dbReference>
<dbReference type="FunFam" id="2.60.40.180:FF:000002">
    <property type="entry name" value="Transthyretin"/>
    <property type="match status" value="1"/>
</dbReference>
<dbReference type="Gene3D" id="2.60.40.180">
    <property type="entry name" value="Transthyretin/hydroxyisourate hydrolase domain"/>
    <property type="match status" value="1"/>
</dbReference>
<dbReference type="InterPro" id="IPR023418">
    <property type="entry name" value="Thyroxine_BS"/>
</dbReference>
<dbReference type="InterPro" id="IPR000895">
    <property type="entry name" value="Transthyretin/HIU_hydrolase"/>
</dbReference>
<dbReference type="InterPro" id="IPR023416">
    <property type="entry name" value="Transthyretin/HIU_hydrolase_d"/>
</dbReference>
<dbReference type="InterPro" id="IPR036817">
    <property type="entry name" value="Transthyretin/HIU_hydrolase_sf"/>
</dbReference>
<dbReference type="InterPro" id="IPR023419">
    <property type="entry name" value="Transthyretin_CS"/>
</dbReference>
<dbReference type="PANTHER" id="PTHR10395:SF12">
    <property type="entry name" value="TRANSTHYRETIN"/>
    <property type="match status" value="1"/>
</dbReference>
<dbReference type="PANTHER" id="PTHR10395">
    <property type="entry name" value="URICASE AND TRANSTHYRETIN-RELATED"/>
    <property type="match status" value="1"/>
</dbReference>
<dbReference type="Pfam" id="PF00576">
    <property type="entry name" value="Transthyretin"/>
    <property type="match status" value="1"/>
</dbReference>
<dbReference type="PRINTS" id="PR00189">
    <property type="entry name" value="TRNSTHYRETIN"/>
</dbReference>
<dbReference type="SMART" id="SM00095">
    <property type="entry name" value="TR_THY"/>
    <property type="match status" value="1"/>
</dbReference>
<dbReference type="SUPFAM" id="SSF49472">
    <property type="entry name" value="Transthyretin (synonym: prealbumin)"/>
    <property type="match status" value="1"/>
</dbReference>
<dbReference type="PROSITE" id="PS00768">
    <property type="entry name" value="TRANSTHYRETIN_1"/>
    <property type="match status" value="1"/>
</dbReference>
<dbReference type="PROSITE" id="PS00769">
    <property type="entry name" value="TRANSTHYRETIN_2"/>
    <property type="match status" value="1"/>
</dbReference>